<gene>
    <name evidence="1" type="primary">thrB</name>
    <name type="ordered locus">SPCG_1349</name>
</gene>
<proteinExistence type="inferred from homology"/>
<keyword id="KW-0028">Amino-acid biosynthesis</keyword>
<keyword id="KW-0067">ATP-binding</keyword>
<keyword id="KW-0963">Cytoplasm</keyword>
<keyword id="KW-0418">Kinase</keyword>
<keyword id="KW-0547">Nucleotide-binding</keyword>
<keyword id="KW-0791">Threonine biosynthesis</keyword>
<keyword id="KW-0808">Transferase</keyword>
<sequence>MKIIVPATSANIGPGFDSVGVAVTKYLQIEVCEERDEWLIEHQIGKWIPHDERNLLLKIALQIVPDLQPRRLKMTSDVPLARGLGSSSSVIVAGIELANQLGQLNLSDHEKLQLATKIEGHPDNVAPAIYGNLVIASSVEGQVSAIVADFPECDFLAYIPNYELRTRDSRSVLPKKLSYKEAVAASSIANVAVAALLAGDMVTAGQAIEGDLFHERYRQDLVREFAMIKQVTKENGAYATYLSGAGPTVMVLASHDKMPTIKAELEKQPFKGKLHDLRVDTQGVRVEAK</sequence>
<accession>B2IQH7</accession>
<protein>
    <recommendedName>
        <fullName evidence="1">Homoserine kinase</fullName>
        <shortName evidence="1">HK</shortName>
        <shortName evidence="1">HSK</shortName>
        <ecNumber evidence="1">2.7.1.39</ecNumber>
    </recommendedName>
</protein>
<dbReference type="EC" id="2.7.1.39" evidence="1"/>
<dbReference type="EMBL" id="CP001033">
    <property type="protein sequence ID" value="ACB90601.1"/>
    <property type="molecule type" value="Genomic_DNA"/>
</dbReference>
<dbReference type="RefSeq" id="WP_000692438.1">
    <property type="nucleotide sequence ID" value="NC_010582.1"/>
</dbReference>
<dbReference type="SMR" id="B2IQH7"/>
<dbReference type="GeneID" id="45653380"/>
<dbReference type="KEGG" id="spw:SPCG_1349"/>
<dbReference type="HOGENOM" id="CLU_041243_0_0_9"/>
<dbReference type="UniPathway" id="UPA00050">
    <property type="reaction ID" value="UER00064"/>
</dbReference>
<dbReference type="GO" id="GO:0005737">
    <property type="term" value="C:cytoplasm"/>
    <property type="evidence" value="ECO:0007669"/>
    <property type="project" value="UniProtKB-SubCell"/>
</dbReference>
<dbReference type="GO" id="GO:0005524">
    <property type="term" value="F:ATP binding"/>
    <property type="evidence" value="ECO:0007669"/>
    <property type="project" value="UniProtKB-UniRule"/>
</dbReference>
<dbReference type="GO" id="GO:0004413">
    <property type="term" value="F:homoserine kinase activity"/>
    <property type="evidence" value="ECO:0007669"/>
    <property type="project" value="UniProtKB-UniRule"/>
</dbReference>
<dbReference type="GO" id="GO:0009088">
    <property type="term" value="P:threonine biosynthetic process"/>
    <property type="evidence" value="ECO:0007669"/>
    <property type="project" value="UniProtKB-UniRule"/>
</dbReference>
<dbReference type="Gene3D" id="3.30.230.10">
    <property type="match status" value="1"/>
</dbReference>
<dbReference type="Gene3D" id="3.30.70.890">
    <property type="entry name" value="GHMP kinase, C-terminal domain"/>
    <property type="match status" value="1"/>
</dbReference>
<dbReference type="HAMAP" id="MF_00384">
    <property type="entry name" value="Homoser_kinase"/>
    <property type="match status" value="1"/>
</dbReference>
<dbReference type="InterPro" id="IPR013750">
    <property type="entry name" value="GHMP_kinase_C_dom"/>
</dbReference>
<dbReference type="InterPro" id="IPR036554">
    <property type="entry name" value="GHMP_kinase_C_sf"/>
</dbReference>
<dbReference type="InterPro" id="IPR006204">
    <property type="entry name" value="GHMP_kinase_N_dom"/>
</dbReference>
<dbReference type="InterPro" id="IPR006203">
    <property type="entry name" value="GHMP_knse_ATP-bd_CS"/>
</dbReference>
<dbReference type="InterPro" id="IPR000870">
    <property type="entry name" value="Homoserine_kinase"/>
</dbReference>
<dbReference type="InterPro" id="IPR020568">
    <property type="entry name" value="Ribosomal_Su5_D2-typ_SF"/>
</dbReference>
<dbReference type="InterPro" id="IPR014721">
    <property type="entry name" value="Ribsml_uS5_D2-typ_fold_subgr"/>
</dbReference>
<dbReference type="NCBIfam" id="TIGR00191">
    <property type="entry name" value="thrB"/>
    <property type="match status" value="1"/>
</dbReference>
<dbReference type="PANTHER" id="PTHR20861:SF1">
    <property type="entry name" value="HOMOSERINE KINASE"/>
    <property type="match status" value="1"/>
</dbReference>
<dbReference type="PANTHER" id="PTHR20861">
    <property type="entry name" value="HOMOSERINE/4-DIPHOSPHOCYTIDYL-2-C-METHYL-D-ERYTHRITOL KINASE"/>
    <property type="match status" value="1"/>
</dbReference>
<dbReference type="Pfam" id="PF08544">
    <property type="entry name" value="GHMP_kinases_C"/>
    <property type="match status" value="1"/>
</dbReference>
<dbReference type="Pfam" id="PF00288">
    <property type="entry name" value="GHMP_kinases_N"/>
    <property type="match status" value="1"/>
</dbReference>
<dbReference type="PIRSF" id="PIRSF000676">
    <property type="entry name" value="Homoser_kin"/>
    <property type="match status" value="1"/>
</dbReference>
<dbReference type="PRINTS" id="PR00958">
    <property type="entry name" value="HOMSERKINASE"/>
</dbReference>
<dbReference type="SUPFAM" id="SSF55060">
    <property type="entry name" value="GHMP Kinase, C-terminal domain"/>
    <property type="match status" value="1"/>
</dbReference>
<dbReference type="SUPFAM" id="SSF54211">
    <property type="entry name" value="Ribosomal protein S5 domain 2-like"/>
    <property type="match status" value="1"/>
</dbReference>
<dbReference type="PROSITE" id="PS00627">
    <property type="entry name" value="GHMP_KINASES_ATP"/>
    <property type="match status" value="1"/>
</dbReference>
<name>KHSE_STRPS</name>
<evidence type="ECO:0000255" key="1">
    <source>
        <dbReference type="HAMAP-Rule" id="MF_00384"/>
    </source>
</evidence>
<comment type="function">
    <text evidence="1">Catalyzes the ATP-dependent phosphorylation of L-homoserine to L-homoserine phosphate.</text>
</comment>
<comment type="catalytic activity">
    <reaction evidence="1">
        <text>L-homoserine + ATP = O-phospho-L-homoserine + ADP + H(+)</text>
        <dbReference type="Rhea" id="RHEA:13985"/>
        <dbReference type="ChEBI" id="CHEBI:15378"/>
        <dbReference type="ChEBI" id="CHEBI:30616"/>
        <dbReference type="ChEBI" id="CHEBI:57476"/>
        <dbReference type="ChEBI" id="CHEBI:57590"/>
        <dbReference type="ChEBI" id="CHEBI:456216"/>
        <dbReference type="EC" id="2.7.1.39"/>
    </reaction>
</comment>
<comment type="pathway">
    <text evidence="1">Amino-acid biosynthesis; L-threonine biosynthesis; L-threonine from L-aspartate: step 4/5.</text>
</comment>
<comment type="subcellular location">
    <subcellularLocation>
        <location evidence="1">Cytoplasm</location>
    </subcellularLocation>
</comment>
<comment type="similarity">
    <text evidence="1">Belongs to the GHMP kinase family. Homoserine kinase subfamily.</text>
</comment>
<organism>
    <name type="scientific">Streptococcus pneumoniae (strain CGSP14)</name>
    <dbReference type="NCBI Taxonomy" id="516950"/>
    <lineage>
        <taxon>Bacteria</taxon>
        <taxon>Bacillati</taxon>
        <taxon>Bacillota</taxon>
        <taxon>Bacilli</taxon>
        <taxon>Lactobacillales</taxon>
        <taxon>Streptococcaceae</taxon>
        <taxon>Streptococcus</taxon>
    </lineage>
</organism>
<feature type="chain" id="PRO_1000122447" description="Homoserine kinase">
    <location>
        <begin position="1"/>
        <end position="289"/>
    </location>
</feature>
<feature type="binding site" evidence="1">
    <location>
        <begin position="79"/>
        <end position="89"/>
    </location>
    <ligand>
        <name>ATP</name>
        <dbReference type="ChEBI" id="CHEBI:30616"/>
    </ligand>
</feature>
<reference key="1">
    <citation type="journal article" date="2009" name="BMC Genomics">
        <title>Genome evolution driven by host adaptations results in a more virulent and antimicrobial-resistant Streptococcus pneumoniae serotype 14.</title>
        <authorList>
            <person name="Ding F."/>
            <person name="Tang P."/>
            <person name="Hsu M.-H."/>
            <person name="Cui P."/>
            <person name="Hu S."/>
            <person name="Yu J."/>
            <person name="Chiu C.-H."/>
        </authorList>
    </citation>
    <scope>NUCLEOTIDE SEQUENCE [LARGE SCALE GENOMIC DNA]</scope>
    <source>
        <strain>CGSP14</strain>
    </source>
</reference>